<proteinExistence type="inferred from homology"/>
<keyword id="KW-0274">FAD</keyword>
<keyword id="KW-0285">Flavoprotein</keyword>
<keyword id="KW-0413">Isomerase</keyword>
<keyword id="KW-1185">Reference proteome</keyword>
<reference key="1">
    <citation type="journal article" date="1995" name="Science">
        <title>The minimal gene complement of Mycoplasma genitalium.</title>
        <authorList>
            <person name="Fraser C.M."/>
            <person name="Gocayne J.D."/>
            <person name="White O."/>
            <person name="Adams M.D."/>
            <person name="Clayton R.A."/>
            <person name="Fleischmann R.D."/>
            <person name="Bult C.J."/>
            <person name="Kerlavage A.R."/>
            <person name="Sutton G.G."/>
            <person name="Kelley J.M."/>
            <person name="Fritchman J.L."/>
            <person name="Weidman J.F."/>
            <person name="Small K.V."/>
            <person name="Sandusky M."/>
            <person name="Fuhrmann J.L."/>
            <person name="Nguyen D.T."/>
            <person name="Utterback T.R."/>
            <person name="Saudek D.M."/>
            <person name="Phillips C.A."/>
            <person name="Merrick J.M."/>
            <person name="Tomb J.-F."/>
            <person name="Dougherty B.A."/>
            <person name="Bott K.F."/>
            <person name="Hu P.-C."/>
            <person name="Lucier T.S."/>
            <person name="Peterson S.N."/>
            <person name="Smith H.O."/>
            <person name="Hutchison C.A. III"/>
            <person name="Venter J.C."/>
        </authorList>
    </citation>
    <scope>NUCLEOTIDE SEQUENCE [LARGE SCALE GENOMIC DNA]</scope>
    <source>
        <strain>ATCC 33530 / DSM 19775 / NCTC 10195 / G37</strain>
    </source>
</reference>
<dbReference type="EC" id="5.4.99.9"/>
<dbReference type="EMBL" id="L43967">
    <property type="protein sequence ID" value="AAC71354.1"/>
    <property type="molecule type" value="Genomic_DNA"/>
</dbReference>
<dbReference type="PIR" id="B64215">
    <property type="entry name" value="B64215"/>
</dbReference>
<dbReference type="SMR" id="Q49398"/>
<dbReference type="STRING" id="243273.MG_137"/>
<dbReference type="KEGG" id="mge:MG_137"/>
<dbReference type="eggNOG" id="COG0562">
    <property type="taxonomic scope" value="Bacteria"/>
</dbReference>
<dbReference type="HOGENOM" id="CLU_042118_0_0_14"/>
<dbReference type="InParanoid" id="Q49398"/>
<dbReference type="Proteomes" id="UP000000807">
    <property type="component" value="Chromosome"/>
</dbReference>
<dbReference type="GO" id="GO:0005829">
    <property type="term" value="C:cytosol"/>
    <property type="evidence" value="ECO:0000318"/>
    <property type="project" value="GO_Central"/>
</dbReference>
<dbReference type="GO" id="GO:0050660">
    <property type="term" value="F:flavin adenine dinucleotide binding"/>
    <property type="evidence" value="ECO:0000318"/>
    <property type="project" value="GO_Central"/>
</dbReference>
<dbReference type="GO" id="GO:0008767">
    <property type="term" value="F:UDP-galactopyranose mutase activity"/>
    <property type="evidence" value="ECO:0000318"/>
    <property type="project" value="GO_Central"/>
</dbReference>
<dbReference type="Gene3D" id="3.40.50.720">
    <property type="entry name" value="NAD(P)-binding Rossmann-like Domain"/>
    <property type="match status" value="3"/>
</dbReference>
<dbReference type="InterPro" id="IPR036188">
    <property type="entry name" value="FAD/NAD-bd_sf"/>
</dbReference>
<dbReference type="InterPro" id="IPR004379">
    <property type="entry name" value="UDP-GALP_mutase"/>
</dbReference>
<dbReference type="InterPro" id="IPR015899">
    <property type="entry name" value="UDP-GalPyranose_mutase_C"/>
</dbReference>
<dbReference type="NCBIfam" id="TIGR00031">
    <property type="entry name" value="UDP-GALP_mutase"/>
    <property type="match status" value="1"/>
</dbReference>
<dbReference type="PANTHER" id="PTHR21197">
    <property type="entry name" value="UDP-GALACTOPYRANOSE MUTASE"/>
    <property type="match status" value="1"/>
</dbReference>
<dbReference type="PANTHER" id="PTHR21197:SF0">
    <property type="entry name" value="UDP-GALACTOPYRANOSE MUTASE"/>
    <property type="match status" value="1"/>
</dbReference>
<dbReference type="Pfam" id="PF03275">
    <property type="entry name" value="GLF"/>
    <property type="match status" value="1"/>
</dbReference>
<dbReference type="Pfam" id="PF13450">
    <property type="entry name" value="NAD_binding_8"/>
    <property type="match status" value="1"/>
</dbReference>
<dbReference type="PRINTS" id="PR00420">
    <property type="entry name" value="RNGMNOXGNASE"/>
</dbReference>
<dbReference type="SUPFAM" id="SSF51905">
    <property type="entry name" value="FAD/NAD(P)-binding domain"/>
    <property type="match status" value="1"/>
</dbReference>
<name>GLF_MYCGE</name>
<organism>
    <name type="scientific">Mycoplasma genitalium (strain ATCC 33530 / DSM 19775 / NCTC 10195 / G37)</name>
    <name type="common">Mycoplasmoides genitalium</name>
    <dbReference type="NCBI Taxonomy" id="243273"/>
    <lineage>
        <taxon>Bacteria</taxon>
        <taxon>Bacillati</taxon>
        <taxon>Mycoplasmatota</taxon>
        <taxon>Mycoplasmoidales</taxon>
        <taxon>Mycoplasmoidaceae</taxon>
        <taxon>Mycoplasmoides</taxon>
    </lineage>
</organism>
<sequence>MNVILSVMLFSSPSCVNINSFDILIVGAGISGIVLANILANHNKRVLIVEKRDHIGGNCYDKVDSKTQLLFHQYGPHIFHTNNQTVINFISPFFELNNYHHRVGLKLKNNLDLTLPFDFQQIYKLMGKDGRKLVSFFKENFSLNTHLSLAELQLIDNPLAQKLYQFLISNVYKPYSVKMWGLPFAMINENVINRVKIVLSEQSSYFPDAIIQGLPKSGYTNSFLKMLANPLIDVQLNCKDNLLVYQDEKLFFNNNLIEKPVVYCGLIDKLFNFCFGHLQYRSLAFSWKRFNQKKYQTYPVVNMPLAKSITRSVEYKQLTNQGSFKPQTIVSFETPGSYAINDPRFNEPYYPINNTLNDTLFKKYWKKASKLKNLHLLGRLATYQYIDMDKAILLSIKKAQQLLS</sequence>
<protein>
    <recommendedName>
        <fullName>UDP-galactopyranose mutase</fullName>
        <shortName>UGM</shortName>
        <ecNumber>5.4.99.9</ecNumber>
    </recommendedName>
    <alternativeName>
        <fullName>UDP-GALP mutase</fullName>
    </alternativeName>
    <alternativeName>
        <fullName>Uridine 5-diphosphate galactopyranose mutase</fullName>
    </alternativeName>
</protein>
<accession>Q49398</accession>
<gene>
    <name type="primary">glf</name>
    <name type="ordered locus">MG137</name>
</gene>
<evidence type="ECO:0000250" key="1"/>
<evidence type="ECO:0000305" key="2"/>
<comment type="function">
    <text evidence="1">Involved in the conversion of UDP-GalP into UDP-GalF through a 2-keto intermediate.</text>
</comment>
<comment type="catalytic activity">
    <reaction>
        <text>UDP-alpha-D-galactose = UDP-alpha-D-galactofuranose</text>
        <dbReference type="Rhea" id="RHEA:24132"/>
        <dbReference type="ChEBI" id="CHEBI:66914"/>
        <dbReference type="ChEBI" id="CHEBI:66915"/>
        <dbReference type="EC" id="5.4.99.9"/>
    </reaction>
</comment>
<comment type="cofactor">
    <cofactor evidence="1">
        <name>FAD</name>
        <dbReference type="ChEBI" id="CHEBI:57692"/>
    </cofactor>
</comment>
<comment type="similarity">
    <text evidence="2">Belongs to the UDP-galactopyranose/dTDP-fucopyranose mutase family.</text>
</comment>
<feature type="chain" id="PRO_0000087509" description="UDP-galactopyranose mutase">
    <location>
        <begin position="1"/>
        <end position="404"/>
    </location>
</feature>
<feature type="binding site" evidence="1">
    <location>
        <position position="31"/>
    </location>
    <ligand>
        <name>FAD</name>
        <dbReference type="ChEBI" id="CHEBI:57692"/>
    </ligand>
</feature>
<feature type="binding site" evidence="1">
    <location>
        <begin position="50"/>
        <end position="51"/>
    </location>
    <ligand>
        <name>FAD</name>
        <dbReference type="ChEBI" id="CHEBI:57692"/>
    </ligand>
</feature>
<feature type="binding site" evidence="1">
    <location>
        <position position="58"/>
    </location>
    <ligand>
        <name>FAD</name>
        <dbReference type="ChEBI" id="CHEBI:57692"/>
    </ligand>
</feature>
<feature type="binding site" evidence="1">
    <location>
        <begin position="77"/>
        <end position="78"/>
    </location>
    <ligand>
        <name>FAD</name>
        <dbReference type="ChEBI" id="CHEBI:57692"/>
    </ligand>
</feature>
<feature type="binding site" evidence="1">
    <location>
        <position position="176"/>
    </location>
    <ligand>
        <name>UDP-alpha-D-galactose</name>
        <dbReference type="ChEBI" id="CHEBI:66914"/>
    </ligand>
</feature>
<feature type="binding site" evidence="1">
    <location>
        <position position="180"/>
    </location>
    <ligand>
        <name>UDP-alpha-D-galactose</name>
        <dbReference type="ChEBI" id="CHEBI:66914"/>
    </ligand>
</feature>
<feature type="binding site" evidence="1">
    <location>
        <position position="205"/>
    </location>
    <ligand>
        <name>UDP-alpha-D-galactose</name>
        <dbReference type="ChEBI" id="CHEBI:66914"/>
    </ligand>
</feature>
<feature type="binding site" evidence="1">
    <location>
        <position position="302"/>
    </location>
    <ligand>
        <name>UDP-alpha-D-galactose</name>
        <dbReference type="ChEBI" id="CHEBI:66914"/>
    </ligand>
</feature>
<feature type="binding site" evidence="1">
    <location>
        <position position="311"/>
    </location>
    <ligand>
        <name>UDP-alpha-D-galactose</name>
        <dbReference type="ChEBI" id="CHEBI:66914"/>
    </ligand>
</feature>
<feature type="binding site" evidence="1">
    <location>
        <position position="350"/>
    </location>
    <ligand>
        <name>UDP-alpha-D-galactose</name>
        <dbReference type="ChEBI" id="CHEBI:66914"/>
    </ligand>
</feature>
<feature type="binding site" evidence="1">
    <location>
        <position position="379"/>
    </location>
    <ligand>
        <name>FAD</name>
        <dbReference type="ChEBI" id="CHEBI:57692"/>
    </ligand>
</feature>
<feature type="binding site" evidence="1">
    <location>
        <position position="385"/>
    </location>
    <ligand>
        <name>UDP-alpha-D-galactose</name>
        <dbReference type="ChEBI" id="CHEBI:66914"/>
    </ligand>
</feature>
<feature type="binding site" evidence="1">
    <location>
        <begin position="386"/>
        <end position="391"/>
    </location>
    <ligand>
        <name>FAD</name>
        <dbReference type="ChEBI" id="CHEBI:57692"/>
    </ligand>
</feature>